<dbReference type="EMBL" id="CP000352">
    <property type="protein sequence ID" value="ABF10187.1"/>
    <property type="molecule type" value="Genomic_DNA"/>
</dbReference>
<dbReference type="RefSeq" id="WP_006576245.1">
    <property type="nucleotide sequence ID" value="NC_007973.1"/>
</dbReference>
<dbReference type="SMR" id="Q1LI39"/>
<dbReference type="STRING" id="266264.Rmet_3315"/>
<dbReference type="GeneID" id="70686816"/>
<dbReference type="KEGG" id="rme:Rmet_3315"/>
<dbReference type="eggNOG" id="COG0089">
    <property type="taxonomic scope" value="Bacteria"/>
</dbReference>
<dbReference type="HOGENOM" id="CLU_037562_3_1_4"/>
<dbReference type="Proteomes" id="UP000002429">
    <property type="component" value="Chromosome"/>
</dbReference>
<dbReference type="GO" id="GO:1990904">
    <property type="term" value="C:ribonucleoprotein complex"/>
    <property type="evidence" value="ECO:0007669"/>
    <property type="project" value="UniProtKB-KW"/>
</dbReference>
<dbReference type="GO" id="GO:0005840">
    <property type="term" value="C:ribosome"/>
    <property type="evidence" value="ECO:0007669"/>
    <property type="project" value="UniProtKB-KW"/>
</dbReference>
<dbReference type="GO" id="GO:0019843">
    <property type="term" value="F:rRNA binding"/>
    <property type="evidence" value="ECO:0007669"/>
    <property type="project" value="UniProtKB-UniRule"/>
</dbReference>
<dbReference type="GO" id="GO:0003735">
    <property type="term" value="F:structural constituent of ribosome"/>
    <property type="evidence" value="ECO:0007669"/>
    <property type="project" value="InterPro"/>
</dbReference>
<dbReference type="GO" id="GO:0006412">
    <property type="term" value="P:translation"/>
    <property type="evidence" value="ECO:0007669"/>
    <property type="project" value="UniProtKB-UniRule"/>
</dbReference>
<dbReference type="FunFam" id="3.30.70.330:FF:000001">
    <property type="entry name" value="50S ribosomal protein L23"/>
    <property type="match status" value="1"/>
</dbReference>
<dbReference type="Gene3D" id="3.30.70.330">
    <property type="match status" value="1"/>
</dbReference>
<dbReference type="HAMAP" id="MF_01369_B">
    <property type="entry name" value="Ribosomal_uL23_B"/>
    <property type="match status" value="1"/>
</dbReference>
<dbReference type="InterPro" id="IPR012677">
    <property type="entry name" value="Nucleotide-bd_a/b_plait_sf"/>
</dbReference>
<dbReference type="InterPro" id="IPR013025">
    <property type="entry name" value="Ribosomal_uL23-like"/>
</dbReference>
<dbReference type="InterPro" id="IPR012678">
    <property type="entry name" value="Ribosomal_uL23/eL15/eS24_sf"/>
</dbReference>
<dbReference type="NCBIfam" id="NF004359">
    <property type="entry name" value="PRK05738.1-3"/>
    <property type="match status" value="1"/>
</dbReference>
<dbReference type="NCBIfam" id="NF004363">
    <property type="entry name" value="PRK05738.2-4"/>
    <property type="match status" value="1"/>
</dbReference>
<dbReference type="PANTHER" id="PTHR11620">
    <property type="entry name" value="60S RIBOSOMAL PROTEIN L23A"/>
    <property type="match status" value="1"/>
</dbReference>
<dbReference type="Pfam" id="PF00276">
    <property type="entry name" value="Ribosomal_L23"/>
    <property type="match status" value="1"/>
</dbReference>
<dbReference type="SUPFAM" id="SSF54189">
    <property type="entry name" value="Ribosomal proteins S24e, L23 and L15e"/>
    <property type="match status" value="1"/>
</dbReference>
<keyword id="KW-1185">Reference proteome</keyword>
<keyword id="KW-0687">Ribonucleoprotein</keyword>
<keyword id="KW-0689">Ribosomal protein</keyword>
<keyword id="KW-0694">RNA-binding</keyword>
<keyword id="KW-0699">rRNA-binding</keyword>
<sequence length="104" mass="11763">MTQVAKNDHRLMQVLLAPVVSEKATLVADKNEQVVFEVARDANKAEVKAAVELLFKVEVQSVQILNQKGKQKRFGRFMGRRNHVKKAYVSLKPGQEINFEAEAK</sequence>
<name>RL23_CUPMC</name>
<reference key="1">
    <citation type="journal article" date="2010" name="PLoS ONE">
        <title>The complete genome sequence of Cupriavidus metallidurans strain CH34, a master survivalist in harsh and anthropogenic environments.</title>
        <authorList>
            <person name="Janssen P.J."/>
            <person name="Van Houdt R."/>
            <person name="Moors H."/>
            <person name="Monsieurs P."/>
            <person name="Morin N."/>
            <person name="Michaux A."/>
            <person name="Benotmane M.A."/>
            <person name="Leys N."/>
            <person name="Vallaeys T."/>
            <person name="Lapidus A."/>
            <person name="Monchy S."/>
            <person name="Medigue C."/>
            <person name="Taghavi S."/>
            <person name="McCorkle S."/>
            <person name="Dunn J."/>
            <person name="van der Lelie D."/>
            <person name="Mergeay M."/>
        </authorList>
    </citation>
    <scope>NUCLEOTIDE SEQUENCE [LARGE SCALE GENOMIC DNA]</scope>
    <source>
        <strain>ATCC 43123 / DSM 2839 / NBRC 102507 / CH34</strain>
    </source>
</reference>
<comment type="function">
    <text evidence="1">One of the early assembly proteins it binds 23S rRNA. One of the proteins that surrounds the polypeptide exit tunnel on the outside of the ribosome. Forms the main docking site for trigger factor binding to the ribosome.</text>
</comment>
<comment type="subunit">
    <text evidence="1">Part of the 50S ribosomal subunit. Contacts protein L29, and trigger factor when it is bound to the ribosome.</text>
</comment>
<comment type="similarity">
    <text evidence="1">Belongs to the universal ribosomal protein uL23 family.</text>
</comment>
<evidence type="ECO:0000255" key="1">
    <source>
        <dbReference type="HAMAP-Rule" id="MF_01369"/>
    </source>
</evidence>
<evidence type="ECO:0000305" key="2"/>
<feature type="chain" id="PRO_0000272815" description="Large ribosomal subunit protein uL23">
    <location>
        <begin position="1"/>
        <end position="104"/>
    </location>
</feature>
<organism>
    <name type="scientific">Cupriavidus metallidurans (strain ATCC 43123 / DSM 2839 / NBRC 102507 / CH34)</name>
    <name type="common">Ralstonia metallidurans</name>
    <dbReference type="NCBI Taxonomy" id="266264"/>
    <lineage>
        <taxon>Bacteria</taxon>
        <taxon>Pseudomonadati</taxon>
        <taxon>Pseudomonadota</taxon>
        <taxon>Betaproteobacteria</taxon>
        <taxon>Burkholderiales</taxon>
        <taxon>Burkholderiaceae</taxon>
        <taxon>Cupriavidus</taxon>
    </lineage>
</organism>
<accession>Q1LI39</accession>
<gene>
    <name evidence="1" type="primary">rplW</name>
    <name type="ordered locus">Rmet_3315</name>
</gene>
<protein>
    <recommendedName>
        <fullName evidence="1">Large ribosomal subunit protein uL23</fullName>
    </recommendedName>
    <alternativeName>
        <fullName evidence="2">50S ribosomal protein L23</fullName>
    </alternativeName>
</protein>
<proteinExistence type="inferred from homology"/>